<feature type="chain" id="PRO_0000157632" description="Large ribosomal subunit protein P1">
    <location>
        <begin position="1"/>
        <end position="101"/>
    </location>
</feature>
<feature type="region of interest" description="Disordered" evidence="2">
    <location>
        <begin position="65"/>
        <end position="89"/>
    </location>
</feature>
<feature type="compositionally biased region" description="Basic and acidic residues" evidence="2">
    <location>
        <begin position="73"/>
        <end position="87"/>
    </location>
</feature>
<organism>
    <name type="scientific">Methanothermococcus thermolithotrophicus</name>
    <name type="common">Methanococcus thermolithotrophicus</name>
    <dbReference type="NCBI Taxonomy" id="2186"/>
    <lineage>
        <taxon>Archaea</taxon>
        <taxon>Methanobacteriati</taxon>
        <taxon>Methanobacteriota</taxon>
        <taxon>Methanomada group</taxon>
        <taxon>Methanococci</taxon>
        <taxon>Methanococcales</taxon>
        <taxon>Methanococcaceae</taxon>
        <taxon>Methanothermococcus</taxon>
    </lineage>
</organism>
<evidence type="ECO:0000255" key="1">
    <source>
        <dbReference type="HAMAP-Rule" id="MF_01478"/>
    </source>
</evidence>
<evidence type="ECO:0000256" key="2">
    <source>
        <dbReference type="SAM" id="MobiDB-lite"/>
    </source>
</evidence>
<keyword id="KW-0687">Ribonucleoprotein</keyword>
<keyword id="KW-0689">Ribosomal protein</keyword>
<comment type="function">
    <text evidence="1">Forms part of the ribosomal stalk, playing a central role in the interaction of the ribosome with GTP-bound translation factors.</text>
</comment>
<comment type="subunit">
    <text evidence="1">Part of the 50S ribosomal subunit. Homodimer, it forms part of the ribosomal stalk which helps the ribosome interact with GTP-bound translation factors. Forms a heptameric uL10/P0(P1)2(P1)2(P1)2 complex, where uL10/P0 forms an elongated spine to which the P1 dimers bind in a sequential fashion.</text>
</comment>
<comment type="similarity">
    <text evidence="1">Belongs to the eukaryotic ribosomal protein P1/P2 family.</text>
</comment>
<protein>
    <recommendedName>
        <fullName evidence="1">Large ribosomal subunit protein P1</fullName>
    </recommendedName>
    <alternativeName>
        <fullName evidence="1">50S ribosomal protein L12</fullName>
    </alternativeName>
</protein>
<gene>
    <name evidence="1" type="primary">rpl12</name>
</gene>
<reference key="1">
    <citation type="submission" date="1998-01" db="EMBL/GenBank/DDBJ databases">
        <authorList>
            <person name="Linhart A."/>
            <person name="Piendl W."/>
        </authorList>
    </citation>
    <scope>NUCLEOTIDE SEQUENCE [GENOMIC DNA]</scope>
</reference>
<dbReference type="EMBL" id="AF044919">
    <property type="protein sequence ID" value="AAC64512.1"/>
    <property type="molecule type" value="Genomic_DNA"/>
</dbReference>
<dbReference type="SMR" id="O52706"/>
<dbReference type="GO" id="GO:1990904">
    <property type="term" value="C:ribonucleoprotein complex"/>
    <property type="evidence" value="ECO:0007669"/>
    <property type="project" value="UniProtKB-KW"/>
</dbReference>
<dbReference type="GO" id="GO:0005840">
    <property type="term" value="C:ribosome"/>
    <property type="evidence" value="ECO:0007669"/>
    <property type="project" value="UniProtKB-KW"/>
</dbReference>
<dbReference type="GO" id="GO:0003735">
    <property type="term" value="F:structural constituent of ribosome"/>
    <property type="evidence" value="ECO:0007669"/>
    <property type="project" value="InterPro"/>
</dbReference>
<dbReference type="GO" id="GO:0006414">
    <property type="term" value="P:translational elongation"/>
    <property type="evidence" value="ECO:0007669"/>
    <property type="project" value="InterPro"/>
</dbReference>
<dbReference type="FunFam" id="1.10.10.1410:FF:000002">
    <property type="entry name" value="60S acidic ribosomal protein P2"/>
    <property type="match status" value="1"/>
</dbReference>
<dbReference type="Gene3D" id="1.10.10.1410">
    <property type="match status" value="1"/>
</dbReference>
<dbReference type="HAMAP" id="MF_01478">
    <property type="entry name" value="Ribosomal_L12_arch"/>
    <property type="match status" value="1"/>
</dbReference>
<dbReference type="InterPro" id="IPR038716">
    <property type="entry name" value="P1/P2_N_sf"/>
</dbReference>
<dbReference type="InterPro" id="IPR027534">
    <property type="entry name" value="Ribosomal_P1/P2"/>
</dbReference>
<dbReference type="InterPro" id="IPR022295">
    <property type="entry name" value="Ribosomal_P1_arc"/>
</dbReference>
<dbReference type="NCBIfam" id="TIGR03685">
    <property type="entry name" value="ribo_P1_arch"/>
    <property type="match status" value="1"/>
</dbReference>
<dbReference type="PANTHER" id="PTHR45696">
    <property type="entry name" value="60S ACIDIC RIBOSOMAL PROTEIN P1"/>
    <property type="match status" value="1"/>
</dbReference>
<dbReference type="PANTHER" id="PTHR45696:SF10">
    <property type="entry name" value="LARGE RIBOSOMAL SUBUNIT PROTEIN P1"/>
    <property type="match status" value="1"/>
</dbReference>
<dbReference type="Pfam" id="PF00428">
    <property type="entry name" value="Ribosomal_60s"/>
    <property type="match status" value="1"/>
</dbReference>
<sequence>MEYIYASLLLHSAGKEITEDAVKAVLSAAGVEVEDARVKALVAALEGVDIEEAIEKAAMPVAAAAAPAAAPAEEPKEEKKEEKKEEDTTAAAAAGLGALFG</sequence>
<name>RL12_METTL</name>
<accession>O52706</accession>
<proteinExistence type="inferred from homology"/>